<dbReference type="EC" id="2.4.1.-"/>
<dbReference type="EMBL" id="AACD01000038">
    <property type="protein sequence ID" value="EAA64414.1"/>
    <property type="status" value="ALT_SEQ"/>
    <property type="molecule type" value="Genomic_DNA"/>
</dbReference>
<dbReference type="EMBL" id="BN001307">
    <property type="protein sequence ID" value="CBF86568.1"/>
    <property type="molecule type" value="Genomic_DNA"/>
</dbReference>
<dbReference type="RefSeq" id="XP_659907.1">
    <property type="nucleotide sequence ID" value="XM_654815.1"/>
</dbReference>
<dbReference type="FunCoup" id="Q5BAX7">
    <property type="interactions" value="39"/>
</dbReference>
<dbReference type="STRING" id="227321.Q5BAX7"/>
<dbReference type="CAZy" id="GT22">
    <property type="family name" value="Glycosyltransferase Family 22"/>
</dbReference>
<dbReference type="GlyCosmos" id="Q5BAX7">
    <property type="glycosylation" value="1 site, No reported glycans"/>
</dbReference>
<dbReference type="EnsemblFungi" id="CBF86568">
    <property type="protein sequence ID" value="CBF86568"/>
    <property type="gene ID" value="ANIA_02303"/>
</dbReference>
<dbReference type="VEuPathDB" id="FungiDB:AN2303"/>
<dbReference type="eggNOG" id="KOG4123">
    <property type="taxonomic scope" value="Eukaryota"/>
</dbReference>
<dbReference type="HOGENOM" id="CLU_022957_2_0_1"/>
<dbReference type="InParanoid" id="Q5BAX7"/>
<dbReference type="OMA" id="HGIHPRY"/>
<dbReference type="OrthoDB" id="10066429at2759"/>
<dbReference type="UniPathway" id="UPA00196"/>
<dbReference type="Proteomes" id="UP000000560">
    <property type="component" value="Chromosome VII"/>
</dbReference>
<dbReference type="GO" id="GO:0005789">
    <property type="term" value="C:endoplasmic reticulum membrane"/>
    <property type="evidence" value="ECO:0000318"/>
    <property type="project" value="GO_Central"/>
</dbReference>
<dbReference type="GO" id="GO:0000026">
    <property type="term" value="F:alpha-1,2-mannosyltransferase activity"/>
    <property type="evidence" value="ECO:0000318"/>
    <property type="project" value="GO_Central"/>
</dbReference>
<dbReference type="GO" id="GO:0006506">
    <property type="term" value="P:GPI anchor biosynthetic process"/>
    <property type="evidence" value="ECO:0000318"/>
    <property type="project" value="GO_Central"/>
</dbReference>
<dbReference type="InterPro" id="IPR005599">
    <property type="entry name" value="GPI_mannosylTrfase"/>
</dbReference>
<dbReference type="PANTHER" id="PTHR22760">
    <property type="entry name" value="GLYCOSYLTRANSFERASE"/>
    <property type="match status" value="1"/>
</dbReference>
<dbReference type="PANTHER" id="PTHR22760:SF3">
    <property type="entry name" value="GPI MANNOSYLTRANSFERASE 4"/>
    <property type="match status" value="1"/>
</dbReference>
<dbReference type="Pfam" id="PF03901">
    <property type="entry name" value="Glyco_transf_22"/>
    <property type="match status" value="1"/>
</dbReference>
<protein>
    <recommendedName>
        <fullName>GPI mannosyltransferase 4</fullName>
        <ecNumber>2.4.1.-</ecNumber>
    </recommendedName>
    <alternativeName>
        <fullName>GPI mannosyltransferase IV</fullName>
        <shortName>GPI-MT-IV</shortName>
    </alternativeName>
</protein>
<sequence>MWRRTYLLLLLIRAYFALSPSYIHPDEHFQGLEVFAGRILSYPSRLPWEFTSERPIRSVFPLYPIYGVPISLLKWFYTETGTESPPAELVYYVVRGVMFLLSFVLEDWAVHDLVPLPRHRRVALVLVASSYVTWTHQTHTFSNSLETLLVAWGLVLINRIIDNKRRSSLFSCAILSFICVAGIFNRITFPAFLVLSLGLVVYNFPRRPLSFFSLVGFGLVFFCIAVFADTTFYKPSASFADVLRSPVITPLNNLLYNTDNSNLALHGLHPHYNHFLVNLPQLLGPALVAMVLQAYNRGFIASWFKNLRAASALSATAMLSIFPHQEPRFLIPCVPLLLSCLQVRKSRIFLGAWVIFNATLGFLMGVYHQGGVVSTQLAVPSVISTTTSLWHESLKGTQSLFATVVWWKTYSPPLWLLGDNSTLNLNIDTRDLMGKPGSEMVKELERLVPTCGSKQKSTELTSSLEQPDAVFVVAPKSVTFLDQFLAPQSPDSSLELLELWSYKKHISLDDLDFGSDGVLPTMKRVIGRRGLGVWLAQRPGCRAIDS</sequence>
<evidence type="ECO:0000250" key="1"/>
<evidence type="ECO:0000255" key="2"/>
<evidence type="ECO:0000305" key="3"/>
<feature type="chain" id="PRO_0000246277" description="GPI mannosyltransferase 4">
    <location>
        <begin position="1"/>
        <end position="546"/>
    </location>
</feature>
<feature type="transmembrane region" description="Helical" evidence="2">
    <location>
        <begin position="5"/>
        <end position="25"/>
    </location>
</feature>
<feature type="transmembrane region" description="Helical" evidence="2">
    <location>
        <begin position="58"/>
        <end position="78"/>
    </location>
</feature>
<feature type="transmembrane region" description="Helical" evidence="2">
    <location>
        <begin position="96"/>
        <end position="116"/>
    </location>
</feature>
<feature type="transmembrane region" description="Helical" evidence="2">
    <location>
        <begin position="141"/>
        <end position="161"/>
    </location>
</feature>
<feature type="transmembrane region" description="Helical" evidence="2">
    <location>
        <begin position="174"/>
        <end position="194"/>
    </location>
</feature>
<feature type="transmembrane region" description="Helical" evidence="2">
    <location>
        <begin position="208"/>
        <end position="228"/>
    </location>
</feature>
<feature type="transmembrane region" description="Helical" evidence="2">
    <location>
        <begin position="348"/>
        <end position="368"/>
    </location>
</feature>
<feature type="glycosylation site" description="N-linked (GlcNAc...) asparagine" evidence="2">
    <location>
        <position position="420"/>
    </location>
</feature>
<gene>
    <name type="primary">smp3</name>
    <name type="ORF">AN2303</name>
</gene>
<accession>Q5BAX7</accession>
<accession>C8VN51</accession>
<proteinExistence type="inferred from homology"/>
<organism>
    <name type="scientific">Emericella nidulans (strain FGSC A4 / ATCC 38163 / CBS 112.46 / NRRL 194 / M139)</name>
    <name type="common">Aspergillus nidulans</name>
    <dbReference type="NCBI Taxonomy" id="227321"/>
    <lineage>
        <taxon>Eukaryota</taxon>
        <taxon>Fungi</taxon>
        <taxon>Dikarya</taxon>
        <taxon>Ascomycota</taxon>
        <taxon>Pezizomycotina</taxon>
        <taxon>Eurotiomycetes</taxon>
        <taxon>Eurotiomycetidae</taxon>
        <taxon>Eurotiales</taxon>
        <taxon>Aspergillaceae</taxon>
        <taxon>Aspergillus</taxon>
        <taxon>Aspergillus subgen. Nidulantes</taxon>
    </lineage>
</organism>
<name>SMP3_EMENI</name>
<keyword id="KW-0256">Endoplasmic reticulum</keyword>
<keyword id="KW-0325">Glycoprotein</keyword>
<keyword id="KW-0328">Glycosyltransferase</keyword>
<keyword id="KW-0337">GPI-anchor biosynthesis</keyword>
<keyword id="KW-0472">Membrane</keyword>
<keyword id="KW-1185">Reference proteome</keyword>
<keyword id="KW-0808">Transferase</keyword>
<keyword id="KW-0812">Transmembrane</keyword>
<keyword id="KW-1133">Transmembrane helix</keyword>
<reference key="1">
    <citation type="journal article" date="2005" name="Nature">
        <title>Sequencing of Aspergillus nidulans and comparative analysis with A. fumigatus and A. oryzae.</title>
        <authorList>
            <person name="Galagan J.E."/>
            <person name="Calvo S.E."/>
            <person name="Cuomo C."/>
            <person name="Ma L.-J."/>
            <person name="Wortman J.R."/>
            <person name="Batzoglou S."/>
            <person name="Lee S.-I."/>
            <person name="Bastuerkmen M."/>
            <person name="Spevak C.C."/>
            <person name="Clutterbuck J."/>
            <person name="Kapitonov V."/>
            <person name="Jurka J."/>
            <person name="Scazzocchio C."/>
            <person name="Farman M.L."/>
            <person name="Butler J."/>
            <person name="Purcell S."/>
            <person name="Harris S."/>
            <person name="Braus G.H."/>
            <person name="Draht O."/>
            <person name="Busch S."/>
            <person name="D'Enfert C."/>
            <person name="Bouchier C."/>
            <person name="Goldman G.H."/>
            <person name="Bell-Pedersen D."/>
            <person name="Griffiths-Jones S."/>
            <person name="Doonan J.H."/>
            <person name="Yu J."/>
            <person name="Vienken K."/>
            <person name="Pain A."/>
            <person name="Freitag M."/>
            <person name="Selker E.U."/>
            <person name="Archer D.B."/>
            <person name="Penalva M.A."/>
            <person name="Oakley B.R."/>
            <person name="Momany M."/>
            <person name="Tanaka T."/>
            <person name="Kumagai T."/>
            <person name="Asai K."/>
            <person name="Machida M."/>
            <person name="Nierman W.C."/>
            <person name="Denning D.W."/>
            <person name="Caddick M.X."/>
            <person name="Hynes M."/>
            <person name="Paoletti M."/>
            <person name="Fischer R."/>
            <person name="Miller B.L."/>
            <person name="Dyer P.S."/>
            <person name="Sachs M.S."/>
            <person name="Osmani S.A."/>
            <person name="Birren B.W."/>
        </authorList>
    </citation>
    <scope>NUCLEOTIDE SEQUENCE [LARGE SCALE GENOMIC DNA]</scope>
    <source>
        <strain>FGSC A4 / ATCC 38163 / CBS 112.46 / NRRL 194 / M139</strain>
    </source>
</reference>
<reference key="2">
    <citation type="journal article" date="2009" name="Fungal Genet. Biol.">
        <title>The 2008 update of the Aspergillus nidulans genome annotation: a community effort.</title>
        <authorList>
            <person name="Wortman J.R."/>
            <person name="Gilsenan J.M."/>
            <person name="Joardar V."/>
            <person name="Deegan J."/>
            <person name="Clutterbuck J."/>
            <person name="Andersen M.R."/>
            <person name="Archer D."/>
            <person name="Bencina M."/>
            <person name="Braus G."/>
            <person name="Coutinho P."/>
            <person name="von Dohren H."/>
            <person name="Doonan J."/>
            <person name="Driessen A.J."/>
            <person name="Durek P."/>
            <person name="Espeso E."/>
            <person name="Fekete E."/>
            <person name="Flipphi M."/>
            <person name="Estrada C.G."/>
            <person name="Geysens S."/>
            <person name="Goldman G."/>
            <person name="de Groot P.W."/>
            <person name="Hansen K."/>
            <person name="Harris S.D."/>
            <person name="Heinekamp T."/>
            <person name="Helmstaedt K."/>
            <person name="Henrissat B."/>
            <person name="Hofmann G."/>
            <person name="Homan T."/>
            <person name="Horio T."/>
            <person name="Horiuchi H."/>
            <person name="James S."/>
            <person name="Jones M."/>
            <person name="Karaffa L."/>
            <person name="Karanyi Z."/>
            <person name="Kato M."/>
            <person name="Keller N."/>
            <person name="Kelly D.E."/>
            <person name="Kiel J.A."/>
            <person name="Kim J.M."/>
            <person name="van der Klei I.J."/>
            <person name="Klis F.M."/>
            <person name="Kovalchuk A."/>
            <person name="Krasevec N."/>
            <person name="Kubicek C.P."/>
            <person name="Liu B."/>
            <person name="Maccabe A."/>
            <person name="Meyer V."/>
            <person name="Mirabito P."/>
            <person name="Miskei M."/>
            <person name="Mos M."/>
            <person name="Mullins J."/>
            <person name="Nelson D.R."/>
            <person name="Nielsen J."/>
            <person name="Oakley B.R."/>
            <person name="Osmani S.A."/>
            <person name="Pakula T."/>
            <person name="Paszewski A."/>
            <person name="Paulsen I."/>
            <person name="Pilsyk S."/>
            <person name="Pocsi I."/>
            <person name="Punt P.J."/>
            <person name="Ram A.F."/>
            <person name="Ren Q."/>
            <person name="Robellet X."/>
            <person name="Robson G."/>
            <person name="Seiboth B."/>
            <person name="van Solingen P."/>
            <person name="Specht T."/>
            <person name="Sun J."/>
            <person name="Taheri-Talesh N."/>
            <person name="Takeshita N."/>
            <person name="Ussery D."/>
            <person name="vanKuyk P.A."/>
            <person name="Visser H."/>
            <person name="van de Vondervoort P.J."/>
            <person name="de Vries R.P."/>
            <person name="Walton J."/>
            <person name="Xiang X."/>
            <person name="Xiong Y."/>
            <person name="Zeng A.P."/>
            <person name="Brandt B.W."/>
            <person name="Cornell M.J."/>
            <person name="van den Hondel C.A."/>
            <person name="Visser J."/>
            <person name="Oliver S.G."/>
            <person name="Turner G."/>
        </authorList>
    </citation>
    <scope>GENOME REANNOTATION</scope>
    <source>
        <strain>FGSC A4 / ATCC 38163 / CBS 112.46 / NRRL 194 / M139</strain>
    </source>
</reference>
<comment type="function">
    <text evidence="1">Alpha-1,2-mannosyltransferase involved in glycosylphosphatidylinositol-anchor biosynthesis. Transfers a fourth mannose to trimannosyl-GPIs during GPI precursor assembly. The presence of a fourth mannose in GPI is essential in fungi (By similarity).</text>
</comment>
<comment type="pathway">
    <text>Glycolipid biosynthesis; glycosylphosphatidylinositol-anchor biosynthesis.</text>
</comment>
<comment type="subcellular location">
    <subcellularLocation>
        <location evidence="1">Endoplasmic reticulum membrane</location>
        <topology evidence="1">Multi-pass membrane protein</topology>
    </subcellularLocation>
</comment>
<comment type="similarity">
    <text evidence="3">Belongs to the glycosyltransferase 22 family. PIGZ subfamily.</text>
</comment>
<comment type="sequence caution" evidence="3">
    <conflict type="erroneous gene model prediction">
        <sequence resource="EMBL-CDS" id="EAA64414"/>
    </conflict>
</comment>